<comment type="catalytic activity">
    <reaction evidence="1">
        <text>tRNA(Gly) + glycine + ATP = glycyl-tRNA(Gly) + AMP + diphosphate</text>
        <dbReference type="Rhea" id="RHEA:16013"/>
        <dbReference type="Rhea" id="RHEA-COMP:9664"/>
        <dbReference type="Rhea" id="RHEA-COMP:9683"/>
        <dbReference type="ChEBI" id="CHEBI:30616"/>
        <dbReference type="ChEBI" id="CHEBI:33019"/>
        <dbReference type="ChEBI" id="CHEBI:57305"/>
        <dbReference type="ChEBI" id="CHEBI:78442"/>
        <dbReference type="ChEBI" id="CHEBI:78522"/>
        <dbReference type="ChEBI" id="CHEBI:456215"/>
        <dbReference type="EC" id="6.1.1.14"/>
    </reaction>
</comment>
<comment type="subunit">
    <text evidence="1">Tetramer of two alpha and two beta subunits.</text>
</comment>
<comment type="subcellular location">
    <subcellularLocation>
        <location evidence="1">Cytoplasm</location>
    </subcellularLocation>
</comment>
<comment type="similarity">
    <text evidence="1">Belongs to the class-II aminoacyl-tRNA synthetase family.</text>
</comment>
<keyword id="KW-0030">Aminoacyl-tRNA synthetase</keyword>
<keyword id="KW-0067">ATP-binding</keyword>
<keyword id="KW-0963">Cytoplasm</keyword>
<keyword id="KW-0436">Ligase</keyword>
<keyword id="KW-0547">Nucleotide-binding</keyword>
<keyword id="KW-0648">Protein biosynthesis</keyword>
<keyword id="KW-1185">Reference proteome</keyword>
<name>SYGA_LEPCP</name>
<sequence length="317" mass="35571">MLTFQHIILRLQDYWDRQGCALLQPYDMEVGAGTSHTATFLRALGPEPWKAAYVQPSRRPKDGRYGNNPNRLQHYYQYQVVLKPAPANILDLYLGSLEALGFDLKKNDIRFVEDDWENPTLGAWGLGWEVWLNGMEVTQFTYFQQVGGIDCKPITGEITYGLERLAMYLQGVENVYDLQYAPGLTYGDVFHQNEVEQSTYNFEHSNVEFLLSAFGAHEGNAQELMAQQLALPAYEQVLKAAHTFNLLDARGAISVTERAAYIGRIRNLARAVAAAYLDSRARLGFPMAPRAWADEIGAKLAAEAEKAALKNEAKKAA</sequence>
<protein>
    <recommendedName>
        <fullName evidence="1">Glycine--tRNA ligase alpha subunit</fullName>
        <ecNumber evidence="1">6.1.1.14</ecNumber>
    </recommendedName>
    <alternativeName>
        <fullName evidence="1">Glycyl-tRNA synthetase alpha subunit</fullName>
        <shortName evidence="1">GlyRS</shortName>
    </alternativeName>
</protein>
<gene>
    <name evidence="1" type="primary">glyQ</name>
    <name type="ordered locus">Lcho_0216</name>
</gene>
<reference key="1">
    <citation type="submission" date="2008-03" db="EMBL/GenBank/DDBJ databases">
        <title>Complete sequence of Leptothrix cholodnii SP-6.</title>
        <authorList>
            <consortium name="US DOE Joint Genome Institute"/>
            <person name="Copeland A."/>
            <person name="Lucas S."/>
            <person name="Lapidus A."/>
            <person name="Glavina del Rio T."/>
            <person name="Dalin E."/>
            <person name="Tice H."/>
            <person name="Bruce D."/>
            <person name="Goodwin L."/>
            <person name="Pitluck S."/>
            <person name="Chertkov O."/>
            <person name="Brettin T."/>
            <person name="Detter J.C."/>
            <person name="Han C."/>
            <person name="Kuske C.R."/>
            <person name="Schmutz J."/>
            <person name="Larimer F."/>
            <person name="Land M."/>
            <person name="Hauser L."/>
            <person name="Kyrpides N."/>
            <person name="Lykidis A."/>
            <person name="Emerson D."/>
            <person name="Richardson P."/>
        </authorList>
    </citation>
    <scope>NUCLEOTIDE SEQUENCE [LARGE SCALE GENOMIC DNA]</scope>
    <source>
        <strain>ATCC 51168 / LMG 8142 / SP-6</strain>
    </source>
</reference>
<feature type="chain" id="PRO_1000101205" description="Glycine--tRNA ligase alpha subunit">
    <location>
        <begin position="1"/>
        <end position="317"/>
    </location>
</feature>
<evidence type="ECO:0000255" key="1">
    <source>
        <dbReference type="HAMAP-Rule" id="MF_00254"/>
    </source>
</evidence>
<dbReference type="EC" id="6.1.1.14" evidence="1"/>
<dbReference type="EMBL" id="CP001013">
    <property type="protein sequence ID" value="ACB32491.1"/>
    <property type="molecule type" value="Genomic_DNA"/>
</dbReference>
<dbReference type="RefSeq" id="WP_012345253.1">
    <property type="nucleotide sequence ID" value="NC_010524.1"/>
</dbReference>
<dbReference type="SMR" id="B1Y7P3"/>
<dbReference type="STRING" id="395495.Lcho_0216"/>
<dbReference type="KEGG" id="lch:Lcho_0216"/>
<dbReference type="eggNOG" id="COG0752">
    <property type="taxonomic scope" value="Bacteria"/>
</dbReference>
<dbReference type="HOGENOM" id="CLU_057066_1_0_4"/>
<dbReference type="OrthoDB" id="9802183at2"/>
<dbReference type="Proteomes" id="UP000001693">
    <property type="component" value="Chromosome"/>
</dbReference>
<dbReference type="GO" id="GO:0005829">
    <property type="term" value="C:cytosol"/>
    <property type="evidence" value="ECO:0007669"/>
    <property type="project" value="TreeGrafter"/>
</dbReference>
<dbReference type="GO" id="GO:0005524">
    <property type="term" value="F:ATP binding"/>
    <property type="evidence" value="ECO:0007669"/>
    <property type="project" value="UniProtKB-UniRule"/>
</dbReference>
<dbReference type="GO" id="GO:0004820">
    <property type="term" value="F:glycine-tRNA ligase activity"/>
    <property type="evidence" value="ECO:0007669"/>
    <property type="project" value="UniProtKB-UniRule"/>
</dbReference>
<dbReference type="GO" id="GO:0006426">
    <property type="term" value="P:glycyl-tRNA aminoacylation"/>
    <property type="evidence" value="ECO:0007669"/>
    <property type="project" value="UniProtKB-UniRule"/>
</dbReference>
<dbReference type="CDD" id="cd00733">
    <property type="entry name" value="GlyRS_alpha_core"/>
    <property type="match status" value="1"/>
</dbReference>
<dbReference type="FunFam" id="3.30.930.10:FF:000006">
    <property type="entry name" value="Glycine--tRNA ligase alpha subunit"/>
    <property type="match status" value="1"/>
</dbReference>
<dbReference type="Gene3D" id="3.30.930.10">
    <property type="entry name" value="Bira Bifunctional Protein, Domain 2"/>
    <property type="match status" value="1"/>
</dbReference>
<dbReference type="Gene3D" id="1.20.58.180">
    <property type="entry name" value="Class II aaRS and biotin synthetases, domain 2"/>
    <property type="match status" value="1"/>
</dbReference>
<dbReference type="HAMAP" id="MF_00254">
    <property type="entry name" value="Gly_tRNA_synth_alpha"/>
    <property type="match status" value="1"/>
</dbReference>
<dbReference type="InterPro" id="IPR045864">
    <property type="entry name" value="aa-tRNA-synth_II/BPL/LPL"/>
</dbReference>
<dbReference type="InterPro" id="IPR006194">
    <property type="entry name" value="Gly-tRNA-synth_heterodimer"/>
</dbReference>
<dbReference type="InterPro" id="IPR002310">
    <property type="entry name" value="Gly-tRNA_ligase_asu"/>
</dbReference>
<dbReference type="NCBIfam" id="TIGR00388">
    <property type="entry name" value="glyQ"/>
    <property type="match status" value="1"/>
</dbReference>
<dbReference type="NCBIfam" id="NF006827">
    <property type="entry name" value="PRK09348.1"/>
    <property type="match status" value="1"/>
</dbReference>
<dbReference type="PANTHER" id="PTHR30075:SF2">
    <property type="entry name" value="GLYCINE--TRNA LIGASE, CHLOROPLASTIC_MITOCHONDRIAL 2"/>
    <property type="match status" value="1"/>
</dbReference>
<dbReference type="PANTHER" id="PTHR30075">
    <property type="entry name" value="GLYCYL-TRNA SYNTHETASE"/>
    <property type="match status" value="1"/>
</dbReference>
<dbReference type="Pfam" id="PF02091">
    <property type="entry name" value="tRNA-synt_2e"/>
    <property type="match status" value="1"/>
</dbReference>
<dbReference type="PRINTS" id="PR01044">
    <property type="entry name" value="TRNASYNTHGA"/>
</dbReference>
<dbReference type="SUPFAM" id="SSF55681">
    <property type="entry name" value="Class II aaRS and biotin synthetases"/>
    <property type="match status" value="1"/>
</dbReference>
<dbReference type="PROSITE" id="PS50861">
    <property type="entry name" value="AA_TRNA_LIGASE_II_GLYAB"/>
    <property type="match status" value="1"/>
</dbReference>
<proteinExistence type="inferred from homology"/>
<accession>B1Y7P3</accession>
<organism>
    <name type="scientific">Leptothrix cholodnii (strain ATCC 51168 / LMG 8142 / SP-6)</name>
    <name type="common">Leptothrix discophora (strain SP-6)</name>
    <dbReference type="NCBI Taxonomy" id="395495"/>
    <lineage>
        <taxon>Bacteria</taxon>
        <taxon>Pseudomonadati</taxon>
        <taxon>Pseudomonadota</taxon>
        <taxon>Betaproteobacteria</taxon>
        <taxon>Burkholderiales</taxon>
        <taxon>Sphaerotilaceae</taxon>
        <taxon>Leptothrix</taxon>
    </lineage>
</organism>